<evidence type="ECO:0000255" key="1">
    <source>
        <dbReference type="HAMAP-Rule" id="MF_00333"/>
    </source>
</evidence>
<comment type="function">
    <text evidence="1">Involved in the heme biosynthesis. Catalyzes the aerobic oxidative decarboxylation of propionate groups of rings A and B of coproporphyrinogen-III to yield the vinyl groups in protoporphyrinogen-IX.</text>
</comment>
<comment type="catalytic activity">
    <reaction evidence="1">
        <text>coproporphyrinogen III + O2 + 2 H(+) = protoporphyrinogen IX + 2 CO2 + 2 H2O</text>
        <dbReference type="Rhea" id="RHEA:18257"/>
        <dbReference type="ChEBI" id="CHEBI:15377"/>
        <dbReference type="ChEBI" id="CHEBI:15378"/>
        <dbReference type="ChEBI" id="CHEBI:15379"/>
        <dbReference type="ChEBI" id="CHEBI:16526"/>
        <dbReference type="ChEBI" id="CHEBI:57307"/>
        <dbReference type="ChEBI" id="CHEBI:57309"/>
        <dbReference type="EC" id="1.3.3.3"/>
    </reaction>
</comment>
<comment type="cofactor">
    <cofactor evidence="1">
        <name>a divalent metal cation</name>
        <dbReference type="ChEBI" id="CHEBI:60240"/>
    </cofactor>
</comment>
<comment type="pathway">
    <text evidence="1">Porphyrin-containing compound metabolism; protoporphyrin-IX biosynthesis; protoporphyrinogen-IX from coproporphyrinogen-III (O2 route): step 1/1.</text>
</comment>
<comment type="subunit">
    <text evidence="1">Homodimer.</text>
</comment>
<comment type="subcellular location">
    <subcellularLocation>
        <location evidence="1">Cytoplasm</location>
    </subcellularLocation>
</comment>
<comment type="similarity">
    <text evidence="1">Belongs to the aerobic coproporphyrinogen-III oxidase family.</text>
</comment>
<protein>
    <recommendedName>
        <fullName evidence="1">Oxygen-dependent coproporphyrinogen-III oxidase</fullName>
        <shortName evidence="1">CPO</shortName>
        <shortName evidence="1">Coprogen oxidase</shortName>
        <shortName evidence="1">Coproporphyrinogenase</shortName>
        <ecNumber evidence="1">1.3.3.3</ecNumber>
    </recommendedName>
</protein>
<dbReference type="EC" id="1.3.3.3" evidence="1"/>
<dbReference type="EMBL" id="CP000789">
    <property type="protein sequence ID" value="ABU69398.1"/>
    <property type="molecule type" value="Genomic_DNA"/>
</dbReference>
<dbReference type="RefSeq" id="WP_005535491.1">
    <property type="nucleotide sequence ID" value="NC_009783.1"/>
</dbReference>
<dbReference type="SMR" id="A7N128"/>
<dbReference type="KEGG" id="vha:VIBHAR_00383"/>
<dbReference type="PATRIC" id="fig|338187.25.peg.2208"/>
<dbReference type="UniPathway" id="UPA00251">
    <property type="reaction ID" value="UER00322"/>
</dbReference>
<dbReference type="Proteomes" id="UP000008152">
    <property type="component" value="Chromosome I"/>
</dbReference>
<dbReference type="GO" id="GO:0005737">
    <property type="term" value="C:cytoplasm"/>
    <property type="evidence" value="ECO:0007669"/>
    <property type="project" value="UniProtKB-SubCell"/>
</dbReference>
<dbReference type="GO" id="GO:0004109">
    <property type="term" value="F:coproporphyrinogen oxidase activity"/>
    <property type="evidence" value="ECO:0007669"/>
    <property type="project" value="UniProtKB-UniRule"/>
</dbReference>
<dbReference type="GO" id="GO:0046872">
    <property type="term" value="F:metal ion binding"/>
    <property type="evidence" value="ECO:0007669"/>
    <property type="project" value="UniProtKB-KW"/>
</dbReference>
<dbReference type="GO" id="GO:0042803">
    <property type="term" value="F:protein homodimerization activity"/>
    <property type="evidence" value="ECO:0000250"/>
    <property type="project" value="UniProtKB"/>
</dbReference>
<dbReference type="GO" id="GO:0006782">
    <property type="term" value="P:protoporphyrinogen IX biosynthetic process"/>
    <property type="evidence" value="ECO:0007669"/>
    <property type="project" value="UniProtKB-UniRule"/>
</dbReference>
<dbReference type="FunFam" id="3.40.1500.10:FF:000001">
    <property type="entry name" value="Oxygen-dependent coproporphyrinogen-III oxidase"/>
    <property type="match status" value="1"/>
</dbReference>
<dbReference type="Gene3D" id="3.40.1500.10">
    <property type="entry name" value="Coproporphyrinogen III oxidase, aerobic"/>
    <property type="match status" value="1"/>
</dbReference>
<dbReference type="HAMAP" id="MF_00333">
    <property type="entry name" value="Coprogen_oxidas"/>
    <property type="match status" value="1"/>
</dbReference>
<dbReference type="InterPro" id="IPR001260">
    <property type="entry name" value="Coprogen_oxidase_aer"/>
</dbReference>
<dbReference type="InterPro" id="IPR036406">
    <property type="entry name" value="Coprogen_oxidase_aer_sf"/>
</dbReference>
<dbReference type="InterPro" id="IPR018375">
    <property type="entry name" value="Coprogen_oxidase_CS"/>
</dbReference>
<dbReference type="NCBIfam" id="NF003727">
    <property type="entry name" value="PRK05330.1"/>
    <property type="match status" value="1"/>
</dbReference>
<dbReference type="PANTHER" id="PTHR10755">
    <property type="entry name" value="COPROPORPHYRINOGEN III OXIDASE, MITOCHONDRIAL"/>
    <property type="match status" value="1"/>
</dbReference>
<dbReference type="PANTHER" id="PTHR10755:SF0">
    <property type="entry name" value="OXYGEN-DEPENDENT COPROPORPHYRINOGEN-III OXIDASE, MITOCHONDRIAL"/>
    <property type="match status" value="1"/>
</dbReference>
<dbReference type="Pfam" id="PF01218">
    <property type="entry name" value="Coprogen_oxidas"/>
    <property type="match status" value="1"/>
</dbReference>
<dbReference type="PIRSF" id="PIRSF000166">
    <property type="entry name" value="Coproporphyri_ox"/>
    <property type="match status" value="1"/>
</dbReference>
<dbReference type="PRINTS" id="PR00073">
    <property type="entry name" value="COPRGNOXDASE"/>
</dbReference>
<dbReference type="SUPFAM" id="SSF102886">
    <property type="entry name" value="Coproporphyrinogen III oxidase"/>
    <property type="match status" value="1"/>
</dbReference>
<dbReference type="PROSITE" id="PS01021">
    <property type="entry name" value="COPROGEN_OXIDASE"/>
    <property type="match status" value="1"/>
</dbReference>
<keyword id="KW-0963">Cytoplasm</keyword>
<keyword id="KW-0350">Heme biosynthesis</keyword>
<keyword id="KW-0479">Metal-binding</keyword>
<keyword id="KW-0560">Oxidoreductase</keyword>
<keyword id="KW-0627">Porphyrin biosynthesis</keyword>
<sequence>MSAIDKHAVKQFLMSLQDSICQQLEQEDGKAVFVEDAWQREKGERLGGGGRTRVLRDGHIFEQGGVNFSHVEGNEMPASATAHRPELAGRRFEAMGVSLVIHPKNPYVPTSHANVRFFIAEKDGEDPIWWFGGGFDLTPFYPFDEDCQSWHDTAKQLCAPFGDEVYPEHKAWCDKYFFLPHRNETRGVGGLFFDDLNQWEFDKCFDYIKAVGEGYCQAYLPIVSRRKDIEFGEREREFQLYRRGRYVEFNLVYDRGTLFGLQSGGRTESILMSMPPLARWEYSYEPQTGSPEAELYERYLTPREW</sequence>
<reference key="1">
    <citation type="submission" date="2007-08" db="EMBL/GenBank/DDBJ databases">
        <authorList>
            <consortium name="The Vibrio harveyi Genome Sequencing Project"/>
            <person name="Bassler B."/>
            <person name="Clifton S.W."/>
            <person name="Fulton L."/>
            <person name="Delehaunty K."/>
            <person name="Fronick C."/>
            <person name="Harrison M."/>
            <person name="Markivic C."/>
            <person name="Fulton R."/>
            <person name="Tin-Wollam A.-M."/>
            <person name="Shah N."/>
            <person name="Pepin K."/>
            <person name="Nash W."/>
            <person name="Thiruvilangam P."/>
            <person name="Bhonagiri V."/>
            <person name="Waters C."/>
            <person name="Tu K.C."/>
            <person name="Irgon J."/>
            <person name="Wilson R.K."/>
        </authorList>
    </citation>
    <scope>NUCLEOTIDE SEQUENCE [LARGE SCALE GENOMIC DNA]</scope>
    <source>
        <strain>ATCC BAA-1116 / BB120</strain>
    </source>
</reference>
<accession>A7N128</accession>
<name>HEM6_VIBC1</name>
<organism>
    <name type="scientific">Vibrio campbellii (strain ATCC BAA-1116)</name>
    <dbReference type="NCBI Taxonomy" id="2902295"/>
    <lineage>
        <taxon>Bacteria</taxon>
        <taxon>Pseudomonadati</taxon>
        <taxon>Pseudomonadota</taxon>
        <taxon>Gammaproteobacteria</taxon>
        <taxon>Vibrionales</taxon>
        <taxon>Vibrionaceae</taxon>
        <taxon>Vibrio</taxon>
    </lineage>
</organism>
<feature type="chain" id="PRO_1000019511" description="Oxygen-dependent coproporphyrinogen-III oxidase">
    <location>
        <begin position="1"/>
        <end position="305"/>
    </location>
</feature>
<feature type="region of interest" description="Important for dimerization" evidence="1">
    <location>
        <begin position="246"/>
        <end position="281"/>
    </location>
</feature>
<feature type="active site" description="Proton donor" evidence="1">
    <location>
        <position position="112"/>
    </location>
</feature>
<feature type="binding site" evidence="1">
    <location>
        <position position="98"/>
    </location>
    <ligand>
        <name>substrate</name>
    </ligand>
</feature>
<feature type="binding site" evidence="1">
    <location>
        <position position="102"/>
    </location>
    <ligand>
        <name>a divalent metal cation</name>
        <dbReference type="ChEBI" id="CHEBI:60240"/>
    </ligand>
</feature>
<feature type="binding site" evidence="1">
    <location>
        <position position="112"/>
    </location>
    <ligand>
        <name>a divalent metal cation</name>
        <dbReference type="ChEBI" id="CHEBI:60240"/>
    </ligand>
</feature>
<feature type="binding site" evidence="1">
    <location>
        <begin position="114"/>
        <end position="116"/>
    </location>
    <ligand>
        <name>substrate</name>
    </ligand>
</feature>
<feature type="binding site" evidence="1">
    <location>
        <position position="151"/>
    </location>
    <ligand>
        <name>a divalent metal cation</name>
        <dbReference type="ChEBI" id="CHEBI:60240"/>
    </ligand>
</feature>
<feature type="binding site" evidence="1">
    <location>
        <position position="181"/>
    </location>
    <ligand>
        <name>a divalent metal cation</name>
        <dbReference type="ChEBI" id="CHEBI:60240"/>
    </ligand>
</feature>
<feature type="binding site" evidence="1">
    <location>
        <begin position="264"/>
        <end position="266"/>
    </location>
    <ligand>
        <name>substrate</name>
    </ligand>
</feature>
<feature type="site" description="Important for dimerization" evidence="1">
    <location>
        <position position="181"/>
    </location>
</feature>
<proteinExistence type="inferred from homology"/>
<gene>
    <name evidence="1" type="primary">hemF</name>
    <name type="ordered locus">VIBHAR_00383</name>
</gene>